<evidence type="ECO:0000255" key="1">
    <source>
        <dbReference type="HAMAP-Rule" id="MF_00580"/>
    </source>
</evidence>
<gene>
    <name evidence="1" type="primary">groES</name>
    <name evidence="1" type="synonym">groS</name>
    <name type="ordered locus">Avin_13470</name>
</gene>
<proteinExistence type="inferred from homology"/>
<organism>
    <name type="scientific">Azotobacter vinelandii (strain DJ / ATCC BAA-1303)</name>
    <dbReference type="NCBI Taxonomy" id="322710"/>
    <lineage>
        <taxon>Bacteria</taxon>
        <taxon>Pseudomonadati</taxon>
        <taxon>Pseudomonadota</taxon>
        <taxon>Gammaproteobacteria</taxon>
        <taxon>Pseudomonadales</taxon>
        <taxon>Pseudomonadaceae</taxon>
        <taxon>Azotobacter</taxon>
    </lineage>
</organism>
<comment type="function">
    <text evidence="1">Together with the chaperonin GroEL, plays an essential role in assisting protein folding. The GroEL-GroES system forms a nano-cage that allows encapsulation of the non-native substrate proteins and provides a physical environment optimized to promote and accelerate protein folding. GroES binds to the apical surface of the GroEL ring, thereby capping the opening of the GroEL channel.</text>
</comment>
<comment type="subunit">
    <text evidence="1">Heptamer of 7 subunits arranged in a ring. Interacts with the chaperonin GroEL.</text>
</comment>
<comment type="subcellular location">
    <subcellularLocation>
        <location evidence="1">Cytoplasm</location>
    </subcellularLocation>
</comment>
<comment type="similarity">
    <text evidence="1">Belongs to the GroES chaperonin family.</text>
</comment>
<accession>C1DQC1</accession>
<protein>
    <recommendedName>
        <fullName evidence="1">Co-chaperonin GroES</fullName>
    </recommendedName>
    <alternativeName>
        <fullName evidence="1">10 kDa chaperonin</fullName>
    </alternativeName>
    <alternativeName>
        <fullName evidence="1">Chaperonin-10</fullName>
        <shortName evidence="1">Cpn10</shortName>
    </alternativeName>
</protein>
<name>CH10_AZOVD</name>
<feature type="chain" id="PRO_1000212106" description="Co-chaperonin GroES">
    <location>
        <begin position="1"/>
        <end position="97"/>
    </location>
</feature>
<keyword id="KW-0143">Chaperone</keyword>
<keyword id="KW-0963">Cytoplasm</keyword>
<sequence length="97" mass="10312">MKLRPLHDRVVIRRSEEETKTAGGIVLPGSAAEKPNRGEVVAVGTGRVLDNGEVRPLAVKVGDKVVFGPYSGSNTIKVDGEDLLVMGENEIFAVVEA</sequence>
<reference key="1">
    <citation type="journal article" date="2009" name="J. Bacteriol.">
        <title>Genome sequence of Azotobacter vinelandii, an obligate aerobe specialized to support diverse anaerobic metabolic processes.</title>
        <authorList>
            <person name="Setubal J.C."/>
            <person name="Dos Santos P."/>
            <person name="Goldman B.S."/>
            <person name="Ertesvaag H."/>
            <person name="Espin G."/>
            <person name="Rubio L.M."/>
            <person name="Valla S."/>
            <person name="Almeida N.F."/>
            <person name="Balasubramanian D."/>
            <person name="Cromes L."/>
            <person name="Curatti L."/>
            <person name="Du Z."/>
            <person name="Godsy E."/>
            <person name="Goodner B."/>
            <person name="Hellner-Burris K."/>
            <person name="Hernandez J.A."/>
            <person name="Houmiel K."/>
            <person name="Imperial J."/>
            <person name="Kennedy C."/>
            <person name="Larson T.J."/>
            <person name="Latreille P."/>
            <person name="Ligon L.S."/>
            <person name="Lu J."/>
            <person name="Maerk M."/>
            <person name="Miller N.M."/>
            <person name="Norton S."/>
            <person name="O'Carroll I.P."/>
            <person name="Paulsen I."/>
            <person name="Raulfs E.C."/>
            <person name="Roemer R."/>
            <person name="Rosser J."/>
            <person name="Segura D."/>
            <person name="Slater S."/>
            <person name="Stricklin S.L."/>
            <person name="Studholme D.J."/>
            <person name="Sun J."/>
            <person name="Viana C.J."/>
            <person name="Wallin E."/>
            <person name="Wang B."/>
            <person name="Wheeler C."/>
            <person name="Zhu H."/>
            <person name="Dean D.R."/>
            <person name="Dixon R."/>
            <person name="Wood D."/>
        </authorList>
    </citation>
    <scope>NUCLEOTIDE SEQUENCE [LARGE SCALE GENOMIC DNA]</scope>
    <source>
        <strain>DJ / ATCC BAA-1303</strain>
    </source>
</reference>
<dbReference type="EMBL" id="CP001157">
    <property type="protein sequence ID" value="ACO77573.1"/>
    <property type="molecule type" value="Genomic_DNA"/>
</dbReference>
<dbReference type="RefSeq" id="WP_012699993.1">
    <property type="nucleotide sequence ID" value="NC_012560.1"/>
</dbReference>
<dbReference type="SMR" id="C1DQC1"/>
<dbReference type="STRING" id="322710.Avin_13470"/>
<dbReference type="EnsemblBacteria" id="ACO77573">
    <property type="protein sequence ID" value="ACO77573"/>
    <property type="gene ID" value="Avin_13470"/>
</dbReference>
<dbReference type="GeneID" id="88184661"/>
<dbReference type="KEGG" id="avn:Avin_13470"/>
<dbReference type="eggNOG" id="COG0234">
    <property type="taxonomic scope" value="Bacteria"/>
</dbReference>
<dbReference type="HOGENOM" id="CLU_132825_2_0_6"/>
<dbReference type="OrthoDB" id="9806791at2"/>
<dbReference type="Proteomes" id="UP000002424">
    <property type="component" value="Chromosome"/>
</dbReference>
<dbReference type="GO" id="GO:0005737">
    <property type="term" value="C:cytoplasm"/>
    <property type="evidence" value="ECO:0007669"/>
    <property type="project" value="UniProtKB-SubCell"/>
</dbReference>
<dbReference type="GO" id="GO:0005524">
    <property type="term" value="F:ATP binding"/>
    <property type="evidence" value="ECO:0007669"/>
    <property type="project" value="InterPro"/>
</dbReference>
<dbReference type="GO" id="GO:0046872">
    <property type="term" value="F:metal ion binding"/>
    <property type="evidence" value="ECO:0007669"/>
    <property type="project" value="TreeGrafter"/>
</dbReference>
<dbReference type="GO" id="GO:0044183">
    <property type="term" value="F:protein folding chaperone"/>
    <property type="evidence" value="ECO:0007669"/>
    <property type="project" value="InterPro"/>
</dbReference>
<dbReference type="GO" id="GO:0051087">
    <property type="term" value="F:protein-folding chaperone binding"/>
    <property type="evidence" value="ECO:0007669"/>
    <property type="project" value="TreeGrafter"/>
</dbReference>
<dbReference type="GO" id="GO:0051082">
    <property type="term" value="F:unfolded protein binding"/>
    <property type="evidence" value="ECO:0007669"/>
    <property type="project" value="TreeGrafter"/>
</dbReference>
<dbReference type="GO" id="GO:0051085">
    <property type="term" value="P:chaperone cofactor-dependent protein refolding"/>
    <property type="evidence" value="ECO:0007669"/>
    <property type="project" value="TreeGrafter"/>
</dbReference>
<dbReference type="CDD" id="cd00320">
    <property type="entry name" value="cpn10"/>
    <property type="match status" value="1"/>
</dbReference>
<dbReference type="FunFam" id="2.30.33.40:FF:000001">
    <property type="entry name" value="10 kDa chaperonin"/>
    <property type="match status" value="1"/>
</dbReference>
<dbReference type="Gene3D" id="2.30.33.40">
    <property type="entry name" value="GroES chaperonin"/>
    <property type="match status" value="1"/>
</dbReference>
<dbReference type="HAMAP" id="MF_00580">
    <property type="entry name" value="CH10"/>
    <property type="match status" value="1"/>
</dbReference>
<dbReference type="InterPro" id="IPR020818">
    <property type="entry name" value="Chaperonin_GroES"/>
</dbReference>
<dbReference type="InterPro" id="IPR037124">
    <property type="entry name" value="Chaperonin_GroES_sf"/>
</dbReference>
<dbReference type="InterPro" id="IPR018369">
    <property type="entry name" value="Chaprnonin_Cpn10_CS"/>
</dbReference>
<dbReference type="InterPro" id="IPR011032">
    <property type="entry name" value="GroES-like_sf"/>
</dbReference>
<dbReference type="NCBIfam" id="NF001526">
    <property type="entry name" value="PRK00364.1-1"/>
    <property type="match status" value="1"/>
</dbReference>
<dbReference type="NCBIfam" id="NF001527">
    <property type="entry name" value="PRK00364.1-2"/>
    <property type="match status" value="1"/>
</dbReference>
<dbReference type="NCBIfam" id="NF001531">
    <property type="entry name" value="PRK00364.2-2"/>
    <property type="match status" value="1"/>
</dbReference>
<dbReference type="NCBIfam" id="NF001533">
    <property type="entry name" value="PRK00364.2-4"/>
    <property type="match status" value="1"/>
</dbReference>
<dbReference type="PANTHER" id="PTHR10772">
    <property type="entry name" value="10 KDA HEAT SHOCK PROTEIN"/>
    <property type="match status" value="1"/>
</dbReference>
<dbReference type="PANTHER" id="PTHR10772:SF58">
    <property type="entry name" value="CO-CHAPERONIN GROES"/>
    <property type="match status" value="1"/>
</dbReference>
<dbReference type="Pfam" id="PF00166">
    <property type="entry name" value="Cpn10"/>
    <property type="match status" value="1"/>
</dbReference>
<dbReference type="PRINTS" id="PR00297">
    <property type="entry name" value="CHAPERONIN10"/>
</dbReference>
<dbReference type="SMART" id="SM00883">
    <property type="entry name" value="Cpn10"/>
    <property type="match status" value="1"/>
</dbReference>
<dbReference type="SUPFAM" id="SSF50129">
    <property type="entry name" value="GroES-like"/>
    <property type="match status" value="1"/>
</dbReference>
<dbReference type="PROSITE" id="PS00681">
    <property type="entry name" value="CHAPERONINS_CPN10"/>
    <property type="match status" value="1"/>
</dbReference>